<comment type="function">
    <text evidence="1">Catalyzes the conversion of 1-hydroxy-2-methyl-2-(E)-butenyl 4-diphosphate (HMBPP) into a mixture of isopentenyl diphosphate (IPP) and dimethylallyl diphosphate (DMAPP). Acts in the terminal step of the DOXP/MEP pathway for isoprenoid precursor biosynthesis.</text>
</comment>
<comment type="catalytic activity">
    <reaction evidence="1">
        <text>isopentenyl diphosphate + 2 oxidized [2Fe-2S]-[ferredoxin] + H2O = (2E)-4-hydroxy-3-methylbut-2-enyl diphosphate + 2 reduced [2Fe-2S]-[ferredoxin] + 2 H(+)</text>
        <dbReference type="Rhea" id="RHEA:24488"/>
        <dbReference type="Rhea" id="RHEA-COMP:10000"/>
        <dbReference type="Rhea" id="RHEA-COMP:10001"/>
        <dbReference type="ChEBI" id="CHEBI:15377"/>
        <dbReference type="ChEBI" id="CHEBI:15378"/>
        <dbReference type="ChEBI" id="CHEBI:33737"/>
        <dbReference type="ChEBI" id="CHEBI:33738"/>
        <dbReference type="ChEBI" id="CHEBI:128753"/>
        <dbReference type="ChEBI" id="CHEBI:128769"/>
        <dbReference type="EC" id="1.17.7.4"/>
    </reaction>
</comment>
<comment type="catalytic activity">
    <reaction evidence="1">
        <text>dimethylallyl diphosphate + 2 oxidized [2Fe-2S]-[ferredoxin] + H2O = (2E)-4-hydroxy-3-methylbut-2-enyl diphosphate + 2 reduced [2Fe-2S]-[ferredoxin] + 2 H(+)</text>
        <dbReference type="Rhea" id="RHEA:24825"/>
        <dbReference type="Rhea" id="RHEA-COMP:10000"/>
        <dbReference type="Rhea" id="RHEA-COMP:10001"/>
        <dbReference type="ChEBI" id="CHEBI:15377"/>
        <dbReference type="ChEBI" id="CHEBI:15378"/>
        <dbReference type="ChEBI" id="CHEBI:33737"/>
        <dbReference type="ChEBI" id="CHEBI:33738"/>
        <dbReference type="ChEBI" id="CHEBI:57623"/>
        <dbReference type="ChEBI" id="CHEBI:128753"/>
        <dbReference type="EC" id="1.17.7.4"/>
    </reaction>
</comment>
<comment type="cofactor">
    <cofactor evidence="1">
        <name>[4Fe-4S] cluster</name>
        <dbReference type="ChEBI" id="CHEBI:49883"/>
    </cofactor>
    <text evidence="1">Binds 1 [4Fe-4S] cluster per subunit.</text>
</comment>
<comment type="pathway">
    <text evidence="1">Isoprenoid biosynthesis; dimethylallyl diphosphate biosynthesis; dimethylallyl diphosphate from (2E)-4-hydroxy-3-methylbutenyl diphosphate: step 1/1.</text>
</comment>
<comment type="pathway">
    <text evidence="1">Isoprenoid biosynthesis; isopentenyl diphosphate biosynthesis via DXP pathway; isopentenyl diphosphate from 1-deoxy-D-xylulose 5-phosphate: step 6/6.</text>
</comment>
<comment type="similarity">
    <text evidence="1">Belongs to the IspH family.</text>
</comment>
<dbReference type="EC" id="1.17.7.4" evidence="1"/>
<dbReference type="EMBL" id="CP001079">
    <property type="protein sequence ID" value="ACM49441.1"/>
    <property type="molecule type" value="Genomic_DNA"/>
</dbReference>
<dbReference type="SMR" id="B9KIX9"/>
<dbReference type="STRING" id="320483.AMF_597"/>
<dbReference type="KEGG" id="amf:AMF_597"/>
<dbReference type="eggNOG" id="COG0761">
    <property type="taxonomic scope" value="Bacteria"/>
</dbReference>
<dbReference type="HOGENOM" id="CLU_027486_1_0_5"/>
<dbReference type="UniPathway" id="UPA00056">
    <property type="reaction ID" value="UER00097"/>
</dbReference>
<dbReference type="UniPathway" id="UPA00059">
    <property type="reaction ID" value="UER00105"/>
</dbReference>
<dbReference type="Proteomes" id="UP000007307">
    <property type="component" value="Chromosome"/>
</dbReference>
<dbReference type="GO" id="GO:0051539">
    <property type="term" value="F:4 iron, 4 sulfur cluster binding"/>
    <property type="evidence" value="ECO:0007669"/>
    <property type="project" value="UniProtKB-UniRule"/>
</dbReference>
<dbReference type="GO" id="GO:0051745">
    <property type="term" value="F:4-hydroxy-3-methylbut-2-enyl diphosphate reductase activity"/>
    <property type="evidence" value="ECO:0007669"/>
    <property type="project" value="UniProtKB-UniRule"/>
</dbReference>
<dbReference type="GO" id="GO:0046872">
    <property type="term" value="F:metal ion binding"/>
    <property type="evidence" value="ECO:0007669"/>
    <property type="project" value="UniProtKB-KW"/>
</dbReference>
<dbReference type="GO" id="GO:0050992">
    <property type="term" value="P:dimethylallyl diphosphate biosynthetic process"/>
    <property type="evidence" value="ECO:0007669"/>
    <property type="project" value="UniProtKB-UniRule"/>
</dbReference>
<dbReference type="GO" id="GO:0019288">
    <property type="term" value="P:isopentenyl diphosphate biosynthetic process, methylerythritol 4-phosphate pathway"/>
    <property type="evidence" value="ECO:0007669"/>
    <property type="project" value="UniProtKB-UniRule"/>
</dbReference>
<dbReference type="GO" id="GO:0016114">
    <property type="term" value="P:terpenoid biosynthetic process"/>
    <property type="evidence" value="ECO:0007669"/>
    <property type="project" value="UniProtKB-UniRule"/>
</dbReference>
<dbReference type="CDD" id="cd13944">
    <property type="entry name" value="lytB_ispH"/>
    <property type="match status" value="1"/>
</dbReference>
<dbReference type="Gene3D" id="3.40.50.11270">
    <property type="match status" value="1"/>
</dbReference>
<dbReference type="Gene3D" id="3.40.1010.20">
    <property type="entry name" value="4-hydroxy-3-methylbut-2-enyl diphosphate reductase, catalytic domain"/>
    <property type="match status" value="2"/>
</dbReference>
<dbReference type="HAMAP" id="MF_00191">
    <property type="entry name" value="IspH"/>
    <property type="match status" value="1"/>
</dbReference>
<dbReference type="InterPro" id="IPR003451">
    <property type="entry name" value="LytB/IspH"/>
</dbReference>
<dbReference type="NCBIfam" id="TIGR00216">
    <property type="entry name" value="ispH_lytB"/>
    <property type="match status" value="1"/>
</dbReference>
<dbReference type="NCBIfam" id="NF002188">
    <property type="entry name" value="PRK01045.1-2"/>
    <property type="match status" value="1"/>
</dbReference>
<dbReference type="NCBIfam" id="NF002190">
    <property type="entry name" value="PRK01045.1-4"/>
    <property type="match status" value="1"/>
</dbReference>
<dbReference type="PANTHER" id="PTHR30426">
    <property type="entry name" value="4-HYDROXY-3-METHYLBUT-2-ENYL DIPHOSPHATE REDUCTASE"/>
    <property type="match status" value="1"/>
</dbReference>
<dbReference type="PANTHER" id="PTHR30426:SF0">
    <property type="entry name" value="4-HYDROXY-3-METHYLBUT-2-ENYL DIPHOSPHATE REDUCTASE"/>
    <property type="match status" value="1"/>
</dbReference>
<dbReference type="Pfam" id="PF02401">
    <property type="entry name" value="LYTB"/>
    <property type="match status" value="1"/>
</dbReference>
<gene>
    <name evidence="1" type="primary">ispH</name>
    <name type="ordered locus">AMF_597</name>
</gene>
<proteinExistence type="inferred from homology"/>
<sequence>MEAVQQNHSVCRGYCGVMLRSRSGGFFRRGFMLGNVEVILARPRGFCAGVERAVRTLESVASRYAGTREVYALHEIVHNLHVVNSFKKMGVKFVSALHEVPEGAVLVFSAHGVSQQIKEESRRKGLTVVDATCPLVTKVHLEIQRYDKSGYQVILVGHKGHREVEGSMGQVSNPVVLVQNVQDVQSIKTPSAAKLAYVTQTTLSMDDTAEIINALKLRFPQIVGPDLRDICYATQNRQTAVKAMSQMVDVVLAIGSKNSSNSNRLLDLAKAQNARAYLIDSYRNIDLEWLIGARRIGITAGASAPEILVQEVIDYLGLHANLKVRTMDGVSENITFKLPELD</sequence>
<reference key="1">
    <citation type="journal article" date="2009" name="BMC Genomics">
        <title>Conservation in the face of diversity: multistrain analysis of an intracellular bacterium.</title>
        <authorList>
            <person name="Dark M.J."/>
            <person name="Herndon D.R."/>
            <person name="Kappmeyer L.S."/>
            <person name="Gonzales M.P."/>
            <person name="Nordeen E."/>
            <person name="Palmer G.H."/>
            <person name="Knowles D.P. Jr."/>
            <person name="Brayton K.A."/>
        </authorList>
    </citation>
    <scope>NUCLEOTIDE SEQUENCE [LARGE SCALE GENOMIC DNA]</scope>
    <source>
        <strain>Florida</strain>
    </source>
</reference>
<feature type="chain" id="PRO_1000124272" description="4-hydroxy-3-methylbut-2-enyl diphosphate reductase">
    <location>
        <begin position="1"/>
        <end position="342"/>
    </location>
</feature>
<feature type="active site" description="Proton donor" evidence="1">
    <location>
        <position position="163"/>
    </location>
</feature>
<feature type="binding site" evidence="1">
    <location>
        <position position="47"/>
    </location>
    <ligand>
        <name>[4Fe-4S] cluster</name>
        <dbReference type="ChEBI" id="CHEBI:49883"/>
    </ligand>
</feature>
<feature type="binding site" evidence="1">
    <location>
        <position position="78"/>
    </location>
    <ligand>
        <name>(2E)-4-hydroxy-3-methylbut-2-enyl diphosphate</name>
        <dbReference type="ChEBI" id="CHEBI:128753"/>
    </ligand>
</feature>
<feature type="binding site" evidence="1">
    <location>
        <position position="78"/>
    </location>
    <ligand>
        <name>dimethylallyl diphosphate</name>
        <dbReference type="ChEBI" id="CHEBI:57623"/>
    </ligand>
</feature>
<feature type="binding site" evidence="1">
    <location>
        <position position="78"/>
    </location>
    <ligand>
        <name>isopentenyl diphosphate</name>
        <dbReference type="ChEBI" id="CHEBI:128769"/>
    </ligand>
</feature>
<feature type="binding site" evidence="1">
    <location>
        <position position="111"/>
    </location>
    <ligand>
        <name>(2E)-4-hydroxy-3-methylbut-2-enyl diphosphate</name>
        <dbReference type="ChEBI" id="CHEBI:128753"/>
    </ligand>
</feature>
<feature type="binding site" evidence="1">
    <location>
        <position position="111"/>
    </location>
    <ligand>
        <name>dimethylallyl diphosphate</name>
        <dbReference type="ChEBI" id="CHEBI:57623"/>
    </ligand>
</feature>
<feature type="binding site" evidence="1">
    <location>
        <position position="111"/>
    </location>
    <ligand>
        <name>isopentenyl diphosphate</name>
        <dbReference type="ChEBI" id="CHEBI:128769"/>
    </ligand>
</feature>
<feature type="binding site" evidence="1">
    <location>
        <position position="133"/>
    </location>
    <ligand>
        <name>[4Fe-4S] cluster</name>
        <dbReference type="ChEBI" id="CHEBI:49883"/>
    </ligand>
</feature>
<feature type="binding site" evidence="1">
    <location>
        <position position="161"/>
    </location>
    <ligand>
        <name>(2E)-4-hydroxy-3-methylbut-2-enyl diphosphate</name>
        <dbReference type="ChEBI" id="CHEBI:128753"/>
    </ligand>
</feature>
<feature type="binding site" evidence="1">
    <location>
        <position position="161"/>
    </location>
    <ligand>
        <name>dimethylallyl diphosphate</name>
        <dbReference type="ChEBI" id="CHEBI:57623"/>
    </ligand>
</feature>
<feature type="binding site" evidence="1">
    <location>
        <position position="161"/>
    </location>
    <ligand>
        <name>isopentenyl diphosphate</name>
        <dbReference type="ChEBI" id="CHEBI:128769"/>
    </ligand>
</feature>
<feature type="binding site" evidence="1">
    <location>
        <position position="201"/>
    </location>
    <ligand>
        <name>(2E)-4-hydroxy-3-methylbut-2-enyl diphosphate</name>
        <dbReference type="ChEBI" id="CHEBI:128753"/>
    </ligand>
</feature>
<feature type="binding site" evidence="1">
    <location>
        <position position="231"/>
    </location>
    <ligand>
        <name>[4Fe-4S] cluster</name>
        <dbReference type="ChEBI" id="CHEBI:49883"/>
    </ligand>
</feature>
<feature type="binding site" evidence="1">
    <location>
        <position position="259"/>
    </location>
    <ligand>
        <name>(2E)-4-hydroxy-3-methylbut-2-enyl diphosphate</name>
        <dbReference type="ChEBI" id="CHEBI:128753"/>
    </ligand>
</feature>
<feature type="binding site" evidence="1">
    <location>
        <position position="259"/>
    </location>
    <ligand>
        <name>dimethylallyl diphosphate</name>
        <dbReference type="ChEBI" id="CHEBI:57623"/>
    </ligand>
</feature>
<feature type="binding site" evidence="1">
    <location>
        <position position="259"/>
    </location>
    <ligand>
        <name>isopentenyl diphosphate</name>
        <dbReference type="ChEBI" id="CHEBI:128769"/>
    </ligand>
</feature>
<feature type="binding site" evidence="1">
    <location>
        <position position="260"/>
    </location>
    <ligand>
        <name>(2E)-4-hydroxy-3-methylbut-2-enyl diphosphate</name>
        <dbReference type="ChEBI" id="CHEBI:128753"/>
    </ligand>
</feature>
<feature type="binding site" evidence="1">
    <location>
        <position position="260"/>
    </location>
    <ligand>
        <name>dimethylallyl diphosphate</name>
        <dbReference type="ChEBI" id="CHEBI:57623"/>
    </ligand>
</feature>
<feature type="binding site" evidence="1">
    <location>
        <position position="260"/>
    </location>
    <ligand>
        <name>isopentenyl diphosphate</name>
        <dbReference type="ChEBI" id="CHEBI:128769"/>
    </ligand>
</feature>
<feature type="binding site" evidence="1">
    <location>
        <position position="261"/>
    </location>
    <ligand>
        <name>(2E)-4-hydroxy-3-methylbut-2-enyl diphosphate</name>
        <dbReference type="ChEBI" id="CHEBI:128753"/>
    </ligand>
</feature>
<feature type="binding site" evidence="1">
    <location>
        <position position="261"/>
    </location>
    <ligand>
        <name>dimethylallyl diphosphate</name>
        <dbReference type="ChEBI" id="CHEBI:57623"/>
    </ligand>
</feature>
<feature type="binding site" evidence="1">
    <location>
        <position position="261"/>
    </location>
    <ligand>
        <name>isopentenyl diphosphate</name>
        <dbReference type="ChEBI" id="CHEBI:128769"/>
    </ligand>
</feature>
<feature type="binding site" evidence="1">
    <location>
        <position position="303"/>
    </location>
    <ligand>
        <name>(2E)-4-hydroxy-3-methylbut-2-enyl diphosphate</name>
        <dbReference type="ChEBI" id="CHEBI:128753"/>
    </ligand>
</feature>
<feature type="binding site" evidence="1">
    <location>
        <position position="303"/>
    </location>
    <ligand>
        <name>dimethylallyl diphosphate</name>
        <dbReference type="ChEBI" id="CHEBI:57623"/>
    </ligand>
</feature>
<feature type="binding site" evidence="1">
    <location>
        <position position="303"/>
    </location>
    <ligand>
        <name>isopentenyl diphosphate</name>
        <dbReference type="ChEBI" id="CHEBI:128769"/>
    </ligand>
</feature>
<keyword id="KW-0004">4Fe-4S</keyword>
<keyword id="KW-0408">Iron</keyword>
<keyword id="KW-0411">Iron-sulfur</keyword>
<keyword id="KW-0414">Isoprene biosynthesis</keyword>
<keyword id="KW-0479">Metal-binding</keyword>
<keyword id="KW-0560">Oxidoreductase</keyword>
<keyword id="KW-1185">Reference proteome</keyword>
<protein>
    <recommendedName>
        <fullName evidence="1">4-hydroxy-3-methylbut-2-enyl diphosphate reductase</fullName>
        <shortName evidence="1">HMBPP reductase</shortName>
        <ecNumber evidence="1">1.17.7.4</ecNumber>
    </recommendedName>
</protein>
<name>ISPH_ANAMF</name>
<organism>
    <name type="scientific">Anaplasma marginale (strain Florida)</name>
    <dbReference type="NCBI Taxonomy" id="320483"/>
    <lineage>
        <taxon>Bacteria</taxon>
        <taxon>Pseudomonadati</taxon>
        <taxon>Pseudomonadota</taxon>
        <taxon>Alphaproteobacteria</taxon>
        <taxon>Rickettsiales</taxon>
        <taxon>Anaplasmataceae</taxon>
        <taxon>Anaplasma</taxon>
    </lineage>
</organism>
<evidence type="ECO:0000255" key="1">
    <source>
        <dbReference type="HAMAP-Rule" id="MF_00191"/>
    </source>
</evidence>
<accession>B9KIX9</accession>